<organism>
    <name type="scientific">Synechococcus sp. (strain WH7803)</name>
    <dbReference type="NCBI Taxonomy" id="32051"/>
    <lineage>
        <taxon>Bacteria</taxon>
        <taxon>Bacillati</taxon>
        <taxon>Cyanobacteriota</taxon>
        <taxon>Cyanophyceae</taxon>
        <taxon>Synechococcales</taxon>
        <taxon>Synechococcaceae</taxon>
        <taxon>Synechococcus</taxon>
    </lineage>
</organism>
<feature type="chain" id="PRO_1000194681" description="Ribonuclease P protein component">
    <location>
        <begin position="1"/>
        <end position="131"/>
    </location>
</feature>
<gene>
    <name evidence="1" type="primary">rnpA</name>
    <name type="ordered locus">SynWH7803_1899</name>
</gene>
<evidence type="ECO:0000255" key="1">
    <source>
        <dbReference type="HAMAP-Rule" id="MF_00227"/>
    </source>
</evidence>
<protein>
    <recommendedName>
        <fullName evidence="1">Ribonuclease P protein component</fullName>
        <shortName evidence="1">RNase P protein</shortName>
        <shortName evidence="1">RNaseP protein</shortName>
        <ecNumber evidence="1">3.1.26.5</ecNumber>
    </recommendedName>
    <alternativeName>
        <fullName evidence="1">Protein C5</fullName>
    </alternativeName>
</protein>
<reference key="1">
    <citation type="submission" date="2006-05" db="EMBL/GenBank/DDBJ databases">
        <authorList>
            <consortium name="Genoscope"/>
        </authorList>
    </citation>
    <scope>NUCLEOTIDE SEQUENCE [LARGE SCALE GENOMIC DNA]</scope>
    <source>
        <strain>WH7803</strain>
    </source>
</reference>
<proteinExistence type="inferred from homology"/>
<comment type="function">
    <text evidence="1">RNaseP catalyzes the removal of the 5'-leader sequence from pre-tRNA to produce the mature 5'-terminus. It can also cleave other RNA substrates such as 4.5S RNA. The protein component plays an auxiliary but essential role in vivo by binding to the 5'-leader sequence and broadening the substrate specificity of the ribozyme.</text>
</comment>
<comment type="catalytic activity">
    <reaction evidence="1">
        <text>Endonucleolytic cleavage of RNA, removing 5'-extranucleotides from tRNA precursor.</text>
        <dbReference type="EC" id="3.1.26.5"/>
    </reaction>
</comment>
<comment type="subunit">
    <text evidence="1">Consists of a catalytic RNA component (M1 or rnpB) and a protein subunit.</text>
</comment>
<comment type="similarity">
    <text evidence="1">Belongs to the RnpA family.</text>
</comment>
<dbReference type="EC" id="3.1.26.5" evidence="1"/>
<dbReference type="EMBL" id="CT971583">
    <property type="protein sequence ID" value="CAK24325.1"/>
    <property type="molecule type" value="Genomic_DNA"/>
</dbReference>
<dbReference type="SMR" id="A5GN10"/>
<dbReference type="STRING" id="32051.SynWH7803_1899"/>
<dbReference type="KEGG" id="syx:SynWH7803_1899"/>
<dbReference type="eggNOG" id="COG0594">
    <property type="taxonomic scope" value="Bacteria"/>
</dbReference>
<dbReference type="HOGENOM" id="CLU_117179_2_0_3"/>
<dbReference type="OrthoDB" id="540358at2"/>
<dbReference type="Proteomes" id="UP000001566">
    <property type="component" value="Chromosome"/>
</dbReference>
<dbReference type="GO" id="GO:0030677">
    <property type="term" value="C:ribonuclease P complex"/>
    <property type="evidence" value="ECO:0007669"/>
    <property type="project" value="TreeGrafter"/>
</dbReference>
<dbReference type="GO" id="GO:0042781">
    <property type="term" value="F:3'-tRNA processing endoribonuclease activity"/>
    <property type="evidence" value="ECO:0007669"/>
    <property type="project" value="TreeGrafter"/>
</dbReference>
<dbReference type="GO" id="GO:0004526">
    <property type="term" value="F:ribonuclease P activity"/>
    <property type="evidence" value="ECO:0007669"/>
    <property type="project" value="UniProtKB-UniRule"/>
</dbReference>
<dbReference type="GO" id="GO:0000049">
    <property type="term" value="F:tRNA binding"/>
    <property type="evidence" value="ECO:0007669"/>
    <property type="project" value="UniProtKB-UniRule"/>
</dbReference>
<dbReference type="GO" id="GO:0001682">
    <property type="term" value="P:tRNA 5'-leader removal"/>
    <property type="evidence" value="ECO:0007669"/>
    <property type="project" value="UniProtKB-UniRule"/>
</dbReference>
<dbReference type="Gene3D" id="3.30.230.10">
    <property type="match status" value="1"/>
</dbReference>
<dbReference type="HAMAP" id="MF_00227">
    <property type="entry name" value="RNase_P"/>
    <property type="match status" value="1"/>
</dbReference>
<dbReference type="InterPro" id="IPR020568">
    <property type="entry name" value="Ribosomal_Su5_D2-typ_SF"/>
</dbReference>
<dbReference type="InterPro" id="IPR014721">
    <property type="entry name" value="Ribsml_uS5_D2-typ_fold_subgr"/>
</dbReference>
<dbReference type="InterPro" id="IPR000100">
    <property type="entry name" value="RNase_P"/>
</dbReference>
<dbReference type="PANTHER" id="PTHR33992">
    <property type="entry name" value="RIBONUCLEASE P PROTEIN COMPONENT"/>
    <property type="match status" value="1"/>
</dbReference>
<dbReference type="PANTHER" id="PTHR33992:SF1">
    <property type="entry name" value="RIBONUCLEASE P PROTEIN COMPONENT"/>
    <property type="match status" value="1"/>
</dbReference>
<dbReference type="Pfam" id="PF00825">
    <property type="entry name" value="Ribonuclease_P"/>
    <property type="match status" value="1"/>
</dbReference>
<dbReference type="SUPFAM" id="SSF54211">
    <property type="entry name" value="Ribosomal protein S5 domain 2-like"/>
    <property type="match status" value="1"/>
</dbReference>
<accession>A5GN10</accession>
<sequence>MVLPASMRLRGHRCFDHLHRRGKRYYGTWMVLRKAPSNAKLLRRDIHGLLTQTQPHSCRIAVVISGKVHKRAVVRNRLRRLLHDHLRLRFEARSTHSDVWLLISLRPGADADEANLLEECDRLLEEAGLQP</sequence>
<name>RNPA_SYNPW</name>
<keyword id="KW-0255">Endonuclease</keyword>
<keyword id="KW-0378">Hydrolase</keyword>
<keyword id="KW-0540">Nuclease</keyword>
<keyword id="KW-1185">Reference proteome</keyword>
<keyword id="KW-0694">RNA-binding</keyword>
<keyword id="KW-0819">tRNA processing</keyword>